<gene>
    <name evidence="1" type="primary">dabA</name>
    <name type="ordered locus">XAC2173</name>
</gene>
<proteinExistence type="inferred from homology"/>
<name>DABA_XANAC</name>
<dbReference type="EMBL" id="AE008923">
    <property type="protein sequence ID" value="AAM37026.1"/>
    <property type="molecule type" value="Genomic_DNA"/>
</dbReference>
<dbReference type="RefSeq" id="WP_015463204.1">
    <property type="nucleotide sequence ID" value="NC_003919.1"/>
</dbReference>
<dbReference type="KEGG" id="xac:XAC2173"/>
<dbReference type="eggNOG" id="COG3002">
    <property type="taxonomic scope" value="Bacteria"/>
</dbReference>
<dbReference type="HOGENOM" id="CLU_009885_1_0_6"/>
<dbReference type="Proteomes" id="UP000000576">
    <property type="component" value="Chromosome"/>
</dbReference>
<dbReference type="GO" id="GO:0005886">
    <property type="term" value="C:plasma membrane"/>
    <property type="evidence" value="ECO:0007669"/>
    <property type="project" value="UniProtKB-SubCell"/>
</dbReference>
<dbReference type="GO" id="GO:0008270">
    <property type="term" value="F:zinc ion binding"/>
    <property type="evidence" value="ECO:0007669"/>
    <property type="project" value="UniProtKB-UniRule"/>
</dbReference>
<dbReference type="HAMAP" id="MF_01871">
    <property type="entry name" value="DabA"/>
    <property type="match status" value="1"/>
</dbReference>
<dbReference type="InterPro" id="IPR018752">
    <property type="entry name" value="DabA"/>
</dbReference>
<dbReference type="PANTHER" id="PTHR38344:SF1">
    <property type="entry name" value="INORGANIC CARBON TRANSPORTER SUBUNIT DABA-RELATED"/>
    <property type="match status" value="1"/>
</dbReference>
<dbReference type="PANTHER" id="PTHR38344">
    <property type="entry name" value="UPF0753 PROTEIN AQ_863"/>
    <property type="match status" value="1"/>
</dbReference>
<dbReference type="Pfam" id="PF10070">
    <property type="entry name" value="DabA"/>
    <property type="match status" value="1"/>
</dbReference>
<protein>
    <recommendedName>
        <fullName evidence="1">Probable inorganic carbon transporter subunit DabA</fullName>
    </recommendedName>
</protein>
<keyword id="KW-0997">Cell inner membrane</keyword>
<keyword id="KW-1003">Cell membrane</keyword>
<keyword id="KW-0472">Membrane</keyword>
<keyword id="KW-0479">Metal-binding</keyword>
<keyword id="KW-0813">Transport</keyword>
<keyword id="KW-0862">Zinc</keyword>
<feature type="chain" id="PRO_0000387325" description="Probable inorganic carbon transporter subunit DabA">
    <location>
        <begin position="1"/>
        <end position="812"/>
    </location>
</feature>
<feature type="binding site" evidence="1">
    <location>
        <position position="339"/>
    </location>
    <ligand>
        <name>Zn(2+)</name>
        <dbReference type="ChEBI" id="CHEBI:29105"/>
    </ligand>
</feature>
<feature type="binding site" evidence="1">
    <location>
        <position position="341"/>
    </location>
    <ligand>
        <name>Zn(2+)</name>
        <dbReference type="ChEBI" id="CHEBI:29105"/>
    </ligand>
</feature>
<feature type="binding site" evidence="1">
    <location>
        <position position="501"/>
    </location>
    <ligand>
        <name>Zn(2+)</name>
        <dbReference type="ChEBI" id="CHEBI:29105"/>
    </ligand>
</feature>
<feature type="binding site" evidence="1">
    <location>
        <position position="516"/>
    </location>
    <ligand>
        <name>Zn(2+)</name>
        <dbReference type="ChEBI" id="CHEBI:29105"/>
    </ligand>
</feature>
<sequence>MLMTTTTTAMSVSLSHDVIIAAAQRAARAIPPLWPLASSVAVNPFLGQASEPLEMAAARLRRASGIAVTMPRHWYAERLQSGEITEDDLRAPLQNAPAALRPPSLSALRHAIAATRPSPQAIPTVAELARDTAAVDWPGIVNERIGHWAAGYFDQGQALWAVGRSGGAYSTWRIIATHDLTPEIAGLAGFARYVADAPANAEDAIVDCVARLGLSQDALDGYFHRLLTTLGGWGQLGRYRLWQAELSGATDACVTDLLAIRMLWEAALLGNGGCALVPGWRTAIAAYAEPVAATSDDVIDSILQEAAERAAQRKLNAVLAAPSPAQVAAGRVKLQMAFCIDVRSEVFRRALESLDSGIQTLGFAGFFGLGIGHRRFASDVVEARLPVLLAPGVITCAGDATASAAASDLSARIAARAKRAWGRFKLAAISSFAFVEATGPIYVAKLLRDGLALARQHAPNEPAPRPADGLDLETRLTMATRILKAMSFTGGFARLVVLAGHGAKVVNNPHASALHCGACGGYSGEVNARLLASLLNDSQVRAGLAARGIVIPADTLFLAALHDTTTDAVTLYTADHPSPGHAEDLAQAAQWLAAAGALARAERAARLPRAHRSQDIAHRARDWAEIRPEWALAGCQAFIAAPRSRTAGRDLAGRAFLHDYDWRYDDGFGVLELILTAPVVVASWISLQYYGSTVAPESFGAGNKLLHNVTGGIGVVEGNGGILRTGLPWQSVHDGQRLTHEPLRLSVLIEAPPEAIANILERHPQVRALFDNRWLHLFALDDEGLIRPGFRRHSRPSLRVAPFKLYRGQVAS</sequence>
<organism>
    <name type="scientific">Xanthomonas axonopodis pv. citri (strain 306)</name>
    <dbReference type="NCBI Taxonomy" id="190486"/>
    <lineage>
        <taxon>Bacteria</taxon>
        <taxon>Pseudomonadati</taxon>
        <taxon>Pseudomonadota</taxon>
        <taxon>Gammaproteobacteria</taxon>
        <taxon>Lysobacterales</taxon>
        <taxon>Lysobacteraceae</taxon>
        <taxon>Xanthomonas</taxon>
    </lineage>
</organism>
<accession>Q8PKJ8</accession>
<reference key="1">
    <citation type="journal article" date="2002" name="Nature">
        <title>Comparison of the genomes of two Xanthomonas pathogens with differing host specificities.</title>
        <authorList>
            <person name="da Silva A.C.R."/>
            <person name="Ferro J.A."/>
            <person name="Reinach F.C."/>
            <person name="Farah C.S."/>
            <person name="Furlan L.R."/>
            <person name="Quaggio R.B."/>
            <person name="Monteiro-Vitorello C.B."/>
            <person name="Van Sluys M.A."/>
            <person name="Almeida N.F. Jr."/>
            <person name="Alves L.M.C."/>
            <person name="do Amaral A.M."/>
            <person name="Bertolini M.C."/>
            <person name="Camargo L.E.A."/>
            <person name="Camarotte G."/>
            <person name="Cannavan F."/>
            <person name="Cardozo J."/>
            <person name="Chambergo F."/>
            <person name="Ciapina L.P."/>
            <person name="Cicarelli R.M.B."/>
            <person name="Coutinho L.L."/>
            <person name="Cursino-Santos J.R."/>
            <person name="El-Dorry H."/>
            <person name="Faria J.B."/>
            <person name="Ferreira A.J.S."/>
            <person name="Ferreira R.C.C."/>
            <person name="Ferro M.I.T."/>
            <person name="Formighieri E.F."/>
            <person name="Franco M.C."/>
            <person name="Greggio C.C."/>
            <person name="Gruber A."/>
            <person name="Katsuyama A.M."/>
            <person name="Kishi L.T."/>
            <person name="Leite R.P."/>
            <person name="Lemos E.G.M."/>
            <person name="Lemos M.V.F."/>
            <person name="Locali E.C."/>
            <person name="Machado M.A."/>
            <person name="Madeira A.M.B.N."/>
            <person name="Martinez-Rossi N.M."/>
            <person name="Martins E.C."/>
            <person name="Meidanis J."/>
            <person name="Menck C.F.M."/>
            <person name="Miyaki C.Y."/>
            <person name="Moon D.H."/>
            <person name="Moreira L.M."/>
            <person name="Novo M.T.M."/>
            <person name="Okura V.K."/>
            <person name="Oliveira M.C."/>
            <person name="Oliveira V.R."/>
            <person name="Pereira H.A."/>
            <person name="Rossi A."/>
            <person name="Sena J.A.D."/>
            <person name="Silva C."/>
            <person name="de Souza R.F."/>
            <person name="Spinola L.A.F."/>
            <person name="Takita M.A."/>
            <person name="Tamura R.E."/>
            <person name="Teixeira E.C."/>
            <person name="Tezza R.I.D."/>
            <person name="Trindade dos Santos M."/>
            <person name="Truffi D."/>
            <person name="Tsai S.M."/>
            <person name="White F.F."/>
            <person name="Setubal J.C."/>
            <person name="Kitajima J.P."/>
        </authorList>
    </citation>
    <scope>NUCLEOTIDE SEQUENCE [LARGE SCALE GENOMIC DNA]</scope>
    <source>
        <strain>306</strain>
    </source>
</reference>
<comment type="function">
    <text evidence="1">Part of an energy-coupled inorganic carbon pump.</text>
</comment>
<comment type="cofactor">
    <cofactor evidence="1">
        <name>Zn(2+)</name>
        <dbReference type="ChEBI" id="CHEBI:29105"/>
    </cofactor>
</comment>
<comment type="subunit">
    <text evidence="1">Forms a complex with DabB.</text>
</comment>
<comment type="subcellular location">
    <subcellularLocation>
        <location evidence="1">Cell inner membrane</location>
        <topology evidence="1">Peripheral membrane protein</topology>
    </subcellularLocation>
</comment>
<comment type="similarity">
    <text evidence="1">Belongs to the inorganic carbon transporter (TC 9.A.2) DabA family.</text>
</comment>
<evidence type="ECO:0000255" key="1">
    <source>
        <dbReference type="HAMAP-Rule" id="MF_01871"/>
    </source>
</evidence>